<name>LEPA_ESCF3</name>
<accession>B7LUZ5</accession>
<keyword id="KW-0997">Cell inner membrane</keyword>
<keyword id="KW-1003">Cell membrane</keyword>
<keyword id="KW-0342">GTP-binding</keyword>
<keyword id="KW-0378">Hydrolase</keyword>
<keyword id="KW-0472">Membrane</keyword>
<keyword id="KW-0547">Nucleotide-binding</keyword>
<keyword id="KW-0648">Protein biosynthesis</keyword>
<dbReference type="EC" id="3.6.5.n1" evidence="1"/>
<dbReference type="EMBL" id="CU928158">
    <property type="protein sequence ID" value="CAQ88053.1"/>
    <property type="molecule type" value="Genomic_DNA"/>
</dbReference>
<dbReference type="RefSeq" id="WP_000790168.1">
    <property type="nucleotide sequence ID" value="NC_011740.1"/>
</dbReference>
<dbReference type="SMR" id="B7LUZ5"/>
<dbReference type="GeneID" id="93774522"/>
<dbReference type="KEGG" id="efe:EFER_0505"/>
<dbReference type="HOGENOM" id="CLU_009995_3_3_6"/>
<dbReference type="OrthoDB" id="9804431at2"/>
<dbReference type="Proteomes" id="UP000000745">
    <property type="component" value="Chromosome"/>
</dbReference>
<dbReference type="GO" id="GO:0005886">
    <property type="term" value="C:plasma membrane"/>
    <property type="evidence" value="ECO:0007669"/>
    <property type="project" value="UniProtKB-SubCell"/>
</dbReference>
<dbReference type="GO" id="GO:0005525">
    <property type="term" value="F:GTP binding"/>
    <property type="evidence" value="ECO:0007669"/>
    <property type="project" value="UniProtKB-UniRule"/>
</dbReference>
<dbReference type="GO" id="GO:0003924">
    <property type="term" value="F:GTPase activity"/>
    <property type="evidence" value="ECO:0007669"/>
    <property type="project" value="UniProtKB-UniRule"/>
</dbReference>
<dbReference type="GO" id="GO:0097216">
    <property type="term" value="F:guanosine tetraphosphate binding"/>
    <property type="evidence" value="ECO:0007669"/>
    <property type="project" value="UniProtKB-ARBA"/>
</dbReference>
<dbReference type="GO" id="GO:0043022">
    <property type="term" value="F:ribosome binding"/>
    <property type="evidence" value="ECO:0007669"/>
    <property type="project" value="UniProtKB-UniRule"/>
</dbReference>
<dbReference type="GO" id="GO:0003746">
    <property type="term" value="F:translation elongation factor activity"/>
    <property type="evidence" value="ECO:0007669"/>
    <property type="project" value="UniProtKB-UniRule"/>
</dbReference>
<dbReference type="GO" id="GO:0045727">
    <property type="term" value="P:positive regulation of translation"/>
    <property type="evidence" value="ECO:0007669"/>
    <property type="project" value="UniProtKB-UniRule"/>
</dbReference>
<dbReference type="CDD" id="cd03699">
    <property type="entry name" value="EF4_II"/>
    <property type="match status" value="1"/>
</dbReference>
<dbReference type="CDD" id="cd16260">
    <property type="entry name" value="EF4_III"/>
    <property type="match status" value="1"/>
</dbReference>
<dbReference type="CDD" id="cd01890">
    <property type="entry name" value="LepA"/>
    <property type="match status" value="1"/>
</dbReference>
<dbReference type="CDD" id="cd03709">
    <property type="entry name" value="lepA_C"/>
    <property type="match status" value="1"/>
</dbReference>
<dbReference type="FunFam" id="3.30.70.240:FF:000005">
    <property type="entry name" value="Elongation factor 4"/>
    <property type="match status" value="1"/>
</dbReference>
<dbReference type="FunFam" id="3.40.50.300:FF:000078">
    <property type="entry name" value="Elongation factor 4"/>
    <property type="match status" value="1"/>
</dbReference>
<dbReference type="FunFam" id="2.40.30.10:FF:000015">
    <property type="entry name" value="Translation factor GUF1, mitochondrial"/>
    <property type="match status" value="1"/>
</dbReference>
<dbReference type="FunFam" id="3.30.70.2570:FF:000001">
    <property type="entry name" value="Translation factor GUF1, mitochondrial"/>
    <property type="match status" value="1"/>
</dbReference>
<dbReference type="FunFam" id="3.30.70.870:FF:000004">
    <property type="entry name" value="Translation factor GUF1, mitochondrial"/>
    <property type="match status" value="1"/>
</dbReference>
<dbReference type="Gene3D" id="3.30.70.240">
    <property type="match status" value="1"/>
</dbReference>
<dbReference type="Gene3D" id="3.30.70.2570">
    <property type="entry name" value="Elongation factor 4, C-terminal domain"/>
    <property type="match status" value="1"/>
</dbReference>
<dbReference type="Gene3D" id="3.30.70.870">
    <property type="entry name" value="Elongation Factor G (Translational Gtpase), domain 3"/>
    <property type="match status" value="1"/>
</dbReference>
<dbReference type="Gene3D" id="3.40.50.300">
    <property type="entry name" value="P-loop containing nucleotide triphosphate hydrolases"/>
    <property type="match status" value="1"/>
</dbReference>
<dbReference type="Gene3D" id="2.40.30.10">
    <property type="entry name" value="Translation factors"/>
    <property type="match status" value="1"/>
</dbReference>
<dbReference type="HAMAP" id="MF_00071">
    <property type="entry name" value="LepA"/>
    <property type="match status" value="1"/>
</dbReference>
<dbReference type="InterPro" id="IPR006297">
    <property type="entry name" value="EF-4"/>
</dbReference>
<dbReference type="InterPro" id="IPR035647">
    <property type="entry name" value="EFG_III/V"/>
</dbReference>
<dbReference type="InterPro" id="IPR000640">
    <property type="entry name" value="EFG_V-like"/>
</dbReference>
<dbReference type="InterPro" id="IPR004161">
    <property type="entry name" value="EFTu-like_2"/>
</dbReference>
<dbReference type="InterPro" id="IPR031157">
    <property type="entry name" value="G_TR_CS"/>
</dbReference>
<dbReference type="InterPro" id="IPR038363">
    <property type="entry name" value="LepA_C_sf"/>
</dbReference>
<dbReference type="InterPro" id="IPR013842">
    <property type="entry name" value="LepA_CTD"/>
</dbReference>
<dbReference type="InterPro" id="IPR035654">
    <property type="entry name" value="LepA_IV"/>
</dbReference>
<dbReference type="InterPro" id="IPR027417">
    <property type="entry name" value="P-loop_NTPase"/>
</dbReference>
<dbReference type="InterPro" id="IPR005225">
    <property type="entry name" value="Small_GTP-bd"/>
</dbReference>
<dbReference type="InterPro" id="IPR000795">
    <property type="entry name" value="T_Tr_GTP-bd_dom"/>
</dbReference>
<dbReference type="NCBIfam" id="TIGR01393">
    <property type="entry name" value="lepA"/>
    <property type="match status" value="1"/>
</dbReference>
<dbReference type="NCBIfam" id="TIGR00231">
    <property type="entry name" value="small_GTP"/>
    <property type="match status" value="1"/>
</dbReference>
<dbReference type="PANTHER" id="PTHR43512:SF4">
    <property type="entry name" value="TRANSLATION FACTOR GUF1 HOMOLOG, CHLOROPLASTIC"/>
    <property type="match status" value="1"/>
</dbReference>
<dbReference type="PANTHER" id="PTHR43512">
    <property type="entry name" value="TRANSLATION FACTOR GUF1-RELATED"/>
    <property type="match status" value="1"/>
</dbReference>
<dbReference type="Pfam" id="PF00679">
    <property type="entry name" value="EFG_C"/>
    <property type="match status" value="1"/>
</dbReference>
<dbReference type="Pfam" id="PF00009">
    <property type="entry name" value="GTP_EFTU"/>
    <property type="match status" value="1"/>
</dbReference>
<dbReference type="Pfam" id="PF03144">
    <property type="entry name" value="GTP_EFTU_D2"/>
    <property type="match status" value="1"/>
</dbReference>
<dbReference type="Pfam" id="PF06421">
    <property type="entry name" value="LepA_C"/>
    <property type="match status" value="1"/>
</dbReference>
<dbReference type="PRINTS" id="PR00315">
    <property type="entry name" value="ELONGATNFCT"/>
</dbReference>
<dbReference type="SUPFAM" id="SSF54980">
    <property type="entry name" value="EF-G C-terminal domain-like"/>
    <property type="match status" value="2"/>
</dbReference>
<dbReference type="SUPFAM" id="SSF52540">
    <property type="entry name" value="P-loop containing nucleoside triphosphate hydrolases"/>
    <property type="match status" value="1"/>
</dbReference>
<dbReference type="PROSITE" id="PS00301">
    <property type="entry name" value="G_TR_1"/>
    <property type="match status" value="1"/>
</dbReference>
<dbReference type="PROSITE" id="PS51722">
    <property type="entry name" value="G_TR_2"/>
    <property type="match status" value="1"/>
</dbReference>
<proteinExistence type="inferred from homology"/>
<organism>
    <name type="scientific">Escherichia fergusonii (strain ATCC 35469 / DSM 13698 / CCUG 18766 / IAM 14443 / JCM 21226 / LMG 7866 / NBRC 102419 / NCTC 12128 / CDC 0568-73)</name>
    <dbReference type="NCBI Taxonomy" id="585054"/>
    <lineage>
        <taxon>Bacteria</taxon>
        <taxon>Pseudomonadati</taxon>
        <taxon>Pseudomonadota</taxon>
        <taxon>Gammaproteobacteria</taxon>
        <taxon>Enterobacterales</taxon>
        <taxon>Enterobacteriaceae</taxon>
        <taxon>Escherichia</taxon>
    </lineage>
</organism>
<protein>
    <recommendedName>
        <fullName evidence="1">Elongation factor 4</fullName>
        <shortName evidence="1">EF-4</shortName>
        <ecNumber evidence="1">3.6.5.n1</ecNumber>
    </recommendedName>
    <alternativeName>
        <fullName evidence="1">Ribosomal back-translocase LepA</fullName>
    </alternativeName>
</protein>
<feature type="chain" id="PRO_1000117026" description="Elongation factor 4">
    <location>
        <begin position="1"/>
        <end position="599"/>
    </location>
</feature>
<feature type="domain" description="tr-type G">
    <location>
        <begin position="2"/>
        <end position="184"/>
    </location>
</feature>
<feature type="binding site" evidence="1">
    <location>
        <begin position="14"/>
        <end position="19"/>
    </location>
    <ligand>
        <name>GTP</name>
        <dbReference type="ChEBI" id="CHEBI:37565"/>
    </ligand>
</feature>
<feature type="binding site" evidence="1">
    <location>
        <begin position="131"/>
        <end position="134"/>
    </location>
    <ligand>
        <name>GTP</name>
        <dbReference type="ChEBI" id="CHEBI:37565"/>
    </ligand>
</feature>
<gene>
    <name evidence="1" type="primary">lepA</name>
    <name type="ordered locus">EFER_0505</name>
</gene>
<reference key="1">
    <citation type="journal article" date="2009" name="PLoS Genet.">
        <title>Organised genome dynamics in the Escherichia coli species results in highly diverse adaptive paths.</title>
        <authorList>
            <person name="Touchon M."/>
            <person name="Hoede C."/>
            <person name="Tenaillon O."/>
            <person name="Barbe V."/>
            <person name="Baeriswyl S."/>
            <person name="Bidet P."/>
            <person name="Bingen E."/>
            <person name="Bonacorsi S."/>
            <person name="Bouchier C."/>
            <person name="Bouvet O."/>
            <person name="Calteau A."/>
            <person name="Chiapello H."/>
            <person name="Clermont O."/>
            <person name="Cruveiller S."/>
            <person name="Danchin A."/>
            <person name="Diard M."/>
            <person name="Dossat C."/>
            <person name="Karoui M.E."/>
            <person name="Frapy E."/>
            <person name="Garry L."/>
            <person name="Ghigo J.M."/>
            <person name="Gilles A.M."/>
            <person name="Johnson J."/>
            <person name="Le Bouguenec C."/>
            <person name="Lescat M."/>
            <person name="Mangenot S."/>
            <person name="Martinez-Jehanne V."/>
            <person name="Matic I."/>
            <person name="Nassif X."/>
            <person name="Oztas S."/>
            <person name="Petit M.A."/>
            <person name="Pichon C."/>
            <person name="Rouy Z."/>
            <person name="Ruf C.S."/>
            <person name="Schneider D."/>
            <person name="Tourret J."/>
            <person name="Vacherie B."/>
            <person name="Vallenet D."/>
            <person name="Medigue C."/>
            <person name="Rocha E.P.C."/>
            <person name="Denamur E."/>
        </authorList>
    </citation>
    <scope>NUCLEOTIDE SEQUENCE [LARGE SCALE GENOMIC DNA]</scope>
    <source>
        <strain>ATCC 35469 / DSM 13698 / BCRC 15582 / CCUG 18766 / IAM 14443 / JCM 21226 / LMG 7866 / NBRC 102419 / NCTC 12128 / CDC 0568-73</strain>
    </source>
</reference>
<comment type="function">
    <text evidence="1">Required for accurate and efficient protein synthesis under certain stress conditions. May act as a fidelity factor of the translation reaction, by catalyzing a one-codon backward translocation of tRNAs on improperly translocated ribosomes. Back-translocation proceeds from a post-translocation (POST) complex to a pre-translocation (PRE) complex, thus giving elongation factor G a second chance to translocate the tRNAs correctly. Binds to ribosomes in a GTP-dependent manner.</text>
</comment>
<comment type="catalytic activity">
    <reaction evidence="1">
        <text>GTP + H2O = GDP + phosphate + H(+)</text>
        <dbReference type="Rhea" id="RHEA:19669"/>
        <dbReference type="ChEBI" id="CHEBI:15377"/>
        <dbReference type="ChEBI" id="CHEBI:15378"/>
        <dbReference type="ChEBI" id="CHEBI:37565"/>
        <dbReference type="ChEBI" id="CHEBI:43474"/>
        <dbReference type="ChEBI" id="CHEBI:58189"/>
        <dbReference type="EC" id="3.6.5.n1"/>
    </reaction>
</comment>
<comment type="subcellular location">
    <subcellularLocation>
        <location evidence="1">Cell inner membrane</location>
        <topology evidence="1">Peripheral membrane protein</topology>
        <orientation evidence="1">Cytoplasmic side</orientation>
    </subcellularLocation>
</comment>
<comment type="similarity">
    <text evidence="1">Belongs to the TRAFAC class translation factor GTPase superfamily. Classic translation factor GTPase family. LepA subfamily.</text>
</comment>
<evidence type="ECO:0000255" key="1">
    <source>
        <dbReference type="HAMAP-Rule" id="MF_00071"/>
    </source>
</evidence>
<sequence>MKNIRNFSIIAHIDHGKSTLSDRIIQICGGLSDREMEAQVLDSMDLERERGITIKAQSVTLDYKASDGETYQLNFIDTPGHVDFSYEVSRSLAACEGALLVVDAGQGVEAQTLANCYTAMEMDLEVVPVLNKIDLPAADPERVAEEIEDIVGIDATDAVRCSAKTGVGVQDVLERLVRDIPPPEGDPEGPLQALIIDSWFDNYLGVVSLIRIKNGTLRKGDKVKVMSTGQTYNADRLGIFTPKQVDRTELKCGEVGWLVCAIKDIHGAPVGDTLTLARNPAEKALPGFKKVKPQVYAGLFPVSSDDYEAFRDALGKLSLNDASLFYEPESSSALGFGFRCGFLGLLHMEIIQERLEREYDLDLITTAPTVVYEVETTSREVIYVDSPSKLPAVNNIYELREPIAECHMLLPQAYLGNVITLCVEKRGVQTNMVYHGNQVALTYEIPMAEVVLDFFDRLKSTSRGYASLDYNFKRFQASDMVRVDVLINGERVDALALITHRDNSQNRGRELVEKMKDLIPRQQFDIAIQAAIGTHIIARSTVKQLRKNVLAKCYGGDISRKKKLLQKQKEGKKRMKQIGNVELPQEAFLAILHVGKDNK</sequence>